<organism>
    <name type="scientific">Staphylococcus aureus (strain MW2)</name>
    <dbReference type="NCBI Taxonomy" id="196620"/>
    <lineage>
        <taxon>Bacteria</taxon>
        <taxon>Bacillati</taxon>
        <taxon>Bacillota</taxon>
        <taxon>Bacilli</taxon>
        <taxon>Bacillales</taxon>
        <taxon>Staphylococcaceae</taxon>
        <taxon>Staphylococcus</taxon>
    </lineage>
</organism>
<keyword id="KW-0378">Hydrolase</keyword>
<keyword id="KW-0645">Protease</keyword>
<keyword id="KW-0964">Secreted</keyword>
<keyword id="KW-0720">Serine protease</keyword>
<keyword id="KW-0732">Signal</keyword>
<comment type="subcellular location">
    <subcellularLocation>
        <location evidence="1">Secreted</location>
    </subcellularLocation>
</comment>
<comment type="similarity">
    <text evidence="2">Belongs to the peptidase S1B family.</text>
</comment>
<evidence type="ECO:0000250" key="1"/>
<evidence type="ECO:0000305" key="2"/>
<dbReference type="EC" id="3.4.21.-"/>
<dbReference type="EMBL" id="BA000033">
    <property type="protein sequence ID" value="BAB95617.1"/>
    <property type="molecule type" value="Genomic_DNA"/>
</dbReference>
<dbReference type="RefSeq" id="WP_001038709.1">
    <property type="nucleotide sequence ID" value="NC_003923.1"/>
</dbReference>
<dbReference type="SMR" id="Q8NVX8"/>
<dbReference type="MEROPS" id="S01.526"/>
<dbReference type="KEGG" id="sam:MW1752"/>
<dbReference type="HOGENOM" id="CLU_073589_2_0_9"/>
<dbReference type="GO" id="GO:0005576">
    <property type="term" value="C:extracellular region"/>
    <property type="evidence" value="ECO:0007669"/>
    <property type="project" value="UniProtKB-SubCell"/>
</dbReference>
<dbReference type="GO" id="GO:0008236">
    <property type="term" value="F:serine-type peptidase activity"/>
    <property type="evidence" value="ECO:0007669"/>
    <property type="project" value="UniProtKB-KW"/>
</dbReference>
<dbReference type="GO" id="GO:0006508">
    <property type="term" value="P:proteolysis"/>
    <property type="evidence" value="ECO:0007669"/>
    <property type="project" value="UniProtKB-KW"/>
</dbReference>
<dbReference type="Gene3D" id="2.40.10.10">
    <property type="entry name" value="Trypsin-like serine proteases"/>
    <property type="match status" value="2"/>
</dbReference>
<dbReference type="InterPro" id="IPR009003">
    <property type="entry name" value="Peptidase_S1_PA"/>
</dbReference>
<dbReference type="InterPro" id="IPR043504">
    <property type="entry name" value="Peptidase_S1_PA_chymotrypsin"/>
</dbReference>
<dbReference type="InterPro" id="IPR008256">
    <property type="entry name" value="Peptidase_S1B"/>
</dbReference>
<dbReference type="InterPro" id="IPR028301">
    <property type="entry name" value="V8_his_AS"/>
</dbReference>
<dbReference type="PANTHER" id="PTHR43019:SF23">
    <property type="entry name" value="PROTEASE DO-LIKE 5, CHLOROPLASTIC"/>
    <property type="match status" value="1"/>
</dbReference>
<dbReference type="PANTHER" id="PTHR43019">
    <property type="entry name" value="SERINE ENDOPROTEASE DEGS"/>
    <property type="match status" value="1"/>
</dbReference>
<dbReference type="Pfam" id="PF13365">
    <property type="entry name" value="Trypsin_2"/>
    <property type="match status" value="1"/>
</dbReference>
<dbReference type="PRINTS" id="PR00839">
    <property type="entry name" value="V8PROTEASE"/>
</dbReference>
<dbReference type="SUPFAM" id="SSF50494">
    <property type="entry name" value="Trypsin-like serine proteases"/>
    <property type="match status" value="1"/>
</dbReference>
<dbReference type="PROSITE" id="PS00672">
    <property type="entry name" value="V8_HIS"/>
    <property type="match status" value="1"/>
</dbReference>
<feature type="signal peptide" evidence="1">
    <location>
        <begin position="1"/>
        <end position="36"/>
    </location>
</feature>
<feature type="chain" id="PRO_0000359583" description="Serine protease SplF">
    <location>
        <begin position="37"/>
        <end position="239"/>
    </location>
</feature>
<feature type="active site" description="Charge relay system" evidence="1">
    <location>
        <position position="75"/>
    </location>
</feature>
<feature type="active site" description="Charge relay system" evidence="1">
    <location>
        <position position="114"/>
    </location>
</feature>
<feature type="active site" description="Charge relay system" evidence="1">
    <location>
        <position position="192"/>
    </location>
</feature>
<gene>
    <name type="primary">splF</name>
    <name type="ordered locus">MW1752</name>
</gene>
<reference key="1">
    <citation type="journal article" date="2002" name="Lancet">
        <title>Genome and virulence determinants of high virulence community-acquired MRSA.</title>
        <authorList>
            <person name="Baba T."/>
            <person name="Takeuchi F."/>
            <person name="Kuroda M."/>
            <person name="Yuzawa H."/>
            <person name="Aoki K."/>
            <person name="Oguchi A."/>
            <person name="Nagai Y."/>
            <person name="Iwama N."/>
            <person name="Asano K."/>
            <person name="Naimi T."/>
            <person name="Kuroda H."/>
            <person name="Cui L."/>
            <person name="Yamamoto K."/>
            <person name="Hiramatsu K."/>
        </authorList>
    </citation>
    <scope>NUCLEOTIDE SEQUENCE [LARGE SCALE GENOMIC DNA]</scope>
    <source>
        <strain>MW2</strain>
    </source>
</reference>
<name>SPLF_STAAW</name>
<proteinExistence type="inferred from homology"/>
<protein>
    <recommendedName>
        <fullName>Serine protease SplF</fullName>
        <ecNumber>3.4.21.-</ecNumber>
    </recommendedName>
</protein>
<sequence>MNKNIIIKSIAALTILTSITGVGTTVVDGIQQTAKAENTVKQITNTNVAPYSGVTWMGAGTGFVVGNHTIITNKHVTYHMKVGDEIKAHPNGFYNNGGGLYKVTKIVDYPGKEDIAVVQVEEKSTQPKGRKFKDFTSKFNIASEAKENEPISVIGYPNPNGNKLQMYESTGKVLSVNGNIVSSDAIIQPGSSGSPILNSKHEAIGVIYAGNKPSGESTRGFAVYFSPEIKKFIADNLDK</sequence>
<accession>Q8NVX8</accession>